<organism>
    <name type="scientific">Homo sapiens</name>
    <name type="common">Human</name>
    <dbReference type="NCBI Taxonomy" id="9606"/>
    <lineage>
        <taxon>Eukaryota</taxon>
        <taxon>Metazoa</taxon>
        <taxon>Chordata</taxon>
        <taxon>Craniata</taxon>
        <taxon>Vertebrata</taxon>
        <taxon>Euteleostomi</taxon>
        <taxon>Mammalia</taxon>
        <taxon>Eutheria</taxon>
        <taxon>Euarchontoglires</taxon>
        <taxon>Primates</taxon>
        <taxon>Haplorrhini</taxon>
        <taxon>Catarrhini</taxon>
        <taxon>Hominidae</taxon>
        <taxon>Homo</taxon>
    </lineage>
</organism>
<sequence length="237" mass="25301">MDKVCAVFGGSRGIGRAVAQLMARKGYRLAVIARNLEGAKAAAGDLGGDHLAFSCDVAKEHDVQNTFEELEKHLGRVNFLVNAAGINRDGLLVRTKTEDMVSQLHTNLLGSMLTCKAAMRTMIQQQGGSIVNVGSIVGLKGNSGQSVYSASKGGLVGFSRALAKEVARKKIRVNVVAPGFVHTDMTKDLKEEHLKKNIPLGRFGETIEVAHAVVFLLESPYITGHVLVVDGGLQLIL</sequence>
<protein>
    <recommendedName>
        <fullName>3-oxoacyl-[acyl-carrier-protein] reductase</fullName>
        <ecNumber evidence="8">1.1.1.100</ecNumber>
    </recommendedName>
    <alternativeName>
        <fullName evidence="12">3-ketoacyl-[acyl-carrier-protein] reductase beta subunit</fullName>
        <shortName evidence="12">KAR beta subunit</shortName>
    </alternativeName>
    <alternativeName>
        <fullName>Carbonyl reductase family member 4</fullName>
        <shortName evidence="10 11 12">CBR4</shortName>
    </alternativeName>
    <alternativeName>
        <fullName evidence="14">Quinone reductase CBR4</fullName>
        <ecNumber evidence="6">1.6.5.10</ecNumber>
    </alternativeName>
    <alternativeName>
        <fullName>Short chain dehydrogenase/reductase family 45C member 1</fullName>
    </alternativeName>
</protein>
<reference key="1">
    <citation type="journal article" date="2004" name="Nat. Genet.">
        <title>Complete sequencing and characterization of 21,243 full-length human cDNAs.</title>
        <authorList>
            <person name="Ota T."/>
            <person name="Suzuki Y."/>
            <person name="Nishikawa T."/>
            <person name="Otsuki T."/>
            <person name="Sugiyama T."/>
            <person name="Irie R."/>
            <person name="Wakamatsu A."/>
            <person name="Hayashi K."/>
            <person name="Sato H."/>
            <person name="Nagai K."/>
            <person name="Kimura K."/>
            <person name="Makita H."/>
            <person name="Sekine M."/>
            <person name="Obayashi M."/>
            <person name="Nishi T."/>
            <person name="Shibahara T."/>
            <person name="Tanaka T."/>
            <person name="Ishii S."/>
            <person name="Yamamoto J."/>
            <person name="Saito K."/>
            <person name="Kawai Y."/>
            <person name="Isono Y."/>
            <person name="Nakamura Y."/>
            <person name="Nagahari K."/>
            <person name="Murakami K."/>
            <person name="Yasuda T."/>
            <person name="Iwayanagi T."/>
            <person name="Wagatsuma M."/>
            <person name="Shiratori A."/>
            <person name="Sudo H."/>
            <person name="Hosoiri T."/>
            <person name="Kaku Y."/>
            <person name="Kodaira H."/>
            <person name="Kondo H."/>
            <person name="Sugawara M."/>
            <person name="Takahashi M."/>
            <person name="Kanda K."/>
            <person name="Yokoi T."/>
            <person name="Furuya T."/>
            <person name="Kikkawa E."/>
            <person name="Omura Y."/>
            <person name="Abe K."/>
            <person name="Kamihara K."/>
            <person name="Katsuta N."/>
            <person name="Sato K."/>
            <person name="Tanikawa M."/>
            <person name="Yamazaki M."/>
            <person name="Ninomiya K."/>
            <person name="Ishibashi T."/>
            <person name="Yamashita H."/>
            <person name="Murakawa K."/>
            <person name="Fujimori K."/>
            <person name="Tanai H."/>
            <person name="Kimata M."/>
            <person name="Watanabe M."/>
            <person name="Hiraoka S."/>
            <person name="Chiba Y."/>
            <person name="Ishida S."/>
            <person name="Ono Y."/>
            <person name="Takiguchi S."/>
            <person name="Watanabe S."/>
            <person name="Yosida M."/>
            <person name="Hotuta T."/>
            <person name="Kusano J."/>
            <person name="Kanehori K."/>
            <person name="Takahashi-Fujii A."/>
            <person name="Hara H."/>
            <person name="Tanase T.-O."/>
            <person name="Nomura Y."/>
            <person name="Togiya S."/>
            <person name="Komai F."/>
            <person name="Hara R."/>
            <person name="Takeuchi K."/>
            <person name="Arita M."/>
            <person name="Imose N."/>
            <person name="Musashino K."/>
            <person name="Yuuki H."/>
            <person name="Oshima A."/>
            <person name="Sasaki N."/>
            <person name="Aotsuka S."/>
            <person name="Yoshikawa Y."/>
            <person name="Matsunawa H."/>
            <person name="Ichihara T."/>
            <person name="Shiohata N."/>
            <person name="Sano S."/>
            <person name="Moriya S."/>
            <person name="Momiyama H."/>
            <person name="Satoh N."/>
            <person name="Takami S."/>
            <person name="Terashima Y."/>
            <person name="Suzuki O."/>
            <person name="Nakagawa S."/>
            <person name="Senoh A."/>
            <person name="Mizoguchi H."/>
            <person name="Goto Y."/>
            <person name="Shimizu F."/>
            <person name="Wakebe H."/>
            <person name="Hishigaki H."/>
            <person name="Watanabe T."/>
            <person name="Sugiyama A."/>
            <person name="Takemoto M."/>
            <person name="Kawakami B."/>
            <person name="Yamazaki M."/>
            <person name="Watanabe K."/>
            <person name="Kumagai A."/>
            <person name="Itakura S."/>
            <person name="Fukuzumi Y."/>
            <person name="Fujimori Y."/>
            <person name="Komiyama M."/>
            <person name="Tashiro H."/>
            <person name="Tanigami A."/>
            <person name="Fujiwara T."/>
            <person name="Ono T."/>
            <person name="Yamada K."/>
            <person name="Fujii Y."/>
            <person name="Ozaki K."/>
            <person name="Hirao M."/>
            <person name="Ohmori Y."/>
            <person name="Kawabata A."/>
            <person name="Hikiji T."/>
            <person name="Kobatake N."/>
            <person name="Inagaki H."/>
            <person name="Ikema Y."/>
            <person name="Okamoto S."/>
            <person name="Okitani R."/>
            <person name="Kawakami T."/>
            <person name="Noguchi S."/>
            <person name="Itoh T."/>
            <person name="Shigeta K."/>
            <person name="Senba T."/>
            <person name="Matsumura K."/>
            <person name="Nakajima Y."/>
            <person name="Mizuno T."/>
            <person name="Morinaga M."/>
            <person name="Sasaki M."/>
            <person name="Togashi T."/>
            <person name="Oyama M."/>
            <person name="Hata H."/>
            <person name="Watanabe M."/>
            <person name="Komatsu T."/>
            <person name="Mizushima-Sugano J."/>
            <person name="Satoh T."/>
            <person name="Shirai Y."/>
            <person name="Takahashi Y."/>
            <person name="Nakagawa K."/>
            <person name="Okumura K."/>
            <person name="Nagase T."/>
            <person name="Nomura N."/>
            <person name="Kikuchi H."/>
            <person name="Masuho Y."/>
            <person name="Yamashita R."/>
            <person name="Nakai K."/>
            <person name="Yada T."/>
            <person name="Nakamura Y."/>
            <person name="Ohara O."/>
            <person name="Isogai T."/>
            <person name="Sugano S."/>
        </authorList>
    </citation>
    <scope>NUCLEOTIDE SEQUENCE [LARGE SCALE MRNA] (ISOFORMS 1 AND 2)</scope>
    <scope>VARIANT MET-70</scope>
    <source>
        <tissue>Embryo</tissue>
        <tissue>Placenta</tissue>
    </source>
</reference>
<reference key="2">
    <citation type="journal article" date="2007" name="BMC Genomics">
        <title>The full-ORF clone resource of the German cDNA consortium.</title>
        <authorList>
            <person name="Bechtel S."/>
            <person name="Rosenfelder H."/>
            <person name="Duda A."/>
            <person name="Schmidt C.P."/>
            <person name="Ernst U."/>
            <person name="Wellenreuther R."/>
            <person name="Mehrle A."/>
            <person name="Schuster C."/>
            <person name="Bahr A."/>
            <person name="Bloecker H."/>
            <person name="Heubner D."/>
            <person name="Hoerlein A."/>
            <person name="Michel G."/>
            <person name="Wedler H."/>
            <person name="Koehrer K."/>
            <person name="Ottenwaelder B."/>
            <person name="Poustka A."/>
            <person name="Wiemann S."/>
            <person name="Schupp I."/>
        </authorList>
    </citation>
    <scope>NUCLEOTIDE SEQUENCE [LARGE SCALE MRNA] (ISOFORM 1)</scope>
    <scope>VARIANT MET-70</scope>
    <source>
        <tissue>Melanoma</tissue>
    </source>
</reference>
<reference key="3">
    <citation type="journal article" date="2005" name="Nature">
        <title>Generation and annotation of the DNA sequences of human chromosomes 2 and 4.</title>
        <authorList>
            <person name="Hillier L.W."/>
            <person name="Graves T.A."/>
            <person name="Fulton R.S."/>
            <person name="Fulton L.A."/>
            <person name="Pepin K.H."/>
            <person name="Minx P."/>
            <person name="Wagner-McPherson C."/>
            <person name="Layman D."/>
            <person name="Wylie K."/>
            <person name="Sekhon M."/>
            <person name="Becker M.C."/>
            <person name="Fewell G.A."/>
            <person name="Delehaunty K.D."/>
            <person name="Miner T.L."/>
            <person name="Nash W.E."/>
            <person name="Kremitzki C."/>
            <person name="Oddy L."/>
            <person name="Du H."/>
            <person name="Sun H."/>
            <person name="Bradshaw-Cordum H."/>
            <person name="Ali J."/>
            <person name="Carter J."/>
            <person name="Cordes M."/>
            <person name="Harris A."/>
            <person name="Isak A."/>
            <person name="van Brunt A."/>
            <person name="Nguyen C."/>
            <person name="Du F."/>
            <person name="Courtney L."/>
            <person name="Kalicki J."/>
            <person name="Ozersky P."/>
            <person name="Abbott S."/>
            <person name="Armstrong J."/>
            <person name="Belter E.A."/>
            <person name="Caruso L."/>
            <person name="Cedroni M."/>
            <person name="Cotton M."/>
            <person name="Davidson T."/>
            <person name="Desai A."/>
            <person name="Elliott G."/>
            <person name="Erb T."/>
            <person name="Fronick C."/>
            <person name="Gaige T."/>
            <person name="Haakenson W."/>
            <person name="Haglund K."/>
            <person name="Holmes A."/>
            <person name="Harkins R."/>
            <person name="Kim K."/>
            <person name="Kruchowski S.S."/>
            <person name="Strong C.M."/>
            <person name="Grewal N."/>
            <person name="Goyea E."/>
            <person name="Hou S."/>
            <person name="Levy A."/>
            <person name="Martinka S."/>
            <person name="Mead K."/>
            <person name="McLellan M.D."/>
            <person name="Meyer R."/>
            <person name="Randall-Maher J."/>
            <person name="Tomlinson C."/>
            <person name="Dauphin-Kohlberg S."/>
            <person name="Kozlowicz-Reilly A."/>
            <person name="Shah N."/>
            <person name="Swearengen-Shahid S."/>
            <person name="Snider J."/>
            <person name="Strong J.T."/>
            <person name="Thompson J."/>
            <person name="Yoakum M."/>
            <person name="Leonard S."/>
            <person name="Pearman C."/>
            <person name="Trani L."/>
            <person name="Radionenko M."/>
            <person name="Waligorski J.E."/>
            <person name="Wang C."/>
            <person name="Rock S.M."/>
            <person name="Tin-Wollam A.-M."/>
            <person name="Maupin R."/>
            <person name="Latreille P."/>
            <person name="Wendl M.C."/>
            <person name="Yang S.-P."/>
            <person name="Pohl C."/>
            <person name="Wallis J.W."/>
            <person name="Spieth J."/>
            <person name="Bieri T.A."/>
            <person name="Berkowicz N."/>
            <person name="Nelson J.O."/>
            <person name="Osborne J."/>
            <person name="Ding L."/>
            <person name="Meyer R."/>
            <person name="Sabo A."/>
            <person name="Shotland Y."/>
            <person name="Sinha P."/>
            <person name="Wohldmann P.E."/>
            <person name="Cook L.L."/>
            <person name="Hickenbotham M.T."/>
            <person name="Eldred J."/>
            <person name="Williams D."/>
            <person name="Jones T.A."/>
            <person name="She X."/>
            <person name="Ciccarelli F.D."/>
            <person name="Izaurralde E."/>
            <person name="Taylor J."/>
            <person name="Schmutz J."/>
            <person name="Myers R.M."/>
            <person name="Cox D.R."/>
            <person name="Huang X."/>
            <person name="McPherson J.D."/>
            <person name="Mardis E.R."/>
            <person name="Clifton S.W."/>
            <person name="Warren W.C."/>
            <person name="Chinwalla A.T."/>
            <person name="Eddy S.R."/>
            <person name="Marra M.A."/>
            <person name="Ovcharenko I."/>
            <person name="Furey T.S."/>
            <person name="Miller W."/>
            <person name="Eichler E.E."/>
            <person name="Bork P."/>
            <person name="Suyama M."/>
            <person name="Torrents D."/>
            <person name="Waterston R.H."/>
            <person name="Wilson R.K."/>
        </authorList>
    </citation>
    <scope>NUCLEOTIDE SEQUENCE [LARGE SCALE GENOMIC DNA]</scope>
</reference>
<reference key="4">
    <citation type="submission" date="2005-09" db="EMBL/GenBank/DDBJ databases">
        <authorList>
            <person name="Mural R.J."/>
            <person name="Istrail S."/>
            <person name="Sutton G.G."/>
            <person name="Florea L."/>
            <person name="Halpern A.L."/>
            <person name="Mobarry C.M."/>
            <person name="Lippert R."/>
            <person name="Walenz B."/>
            <person name="Shatkay H."/>
            <person name="Dew I."/>
            <person name="Miller J.R."/>
            <person name="Flanigan M.J."/>
            <person name="Edwards N.J."/>
            <person name="Bolanos R."/>
            <person name="Fasulo D."/>
            <person name="Halldorsson B.V."/>
            <person name="Hannenhalli S."/>
            <person name="Turner R."/>
            <person name="Yooseph S."/>
            <person name="Lu F."/>
            <person name="Nusskern D.R."/>
            <person name="Shue B.C."/>
            <person name="Zheng X.H."/>
            <person name="Zhong F."/>
            <person name="Delcher A.L."/>
            <person name="Huson D.H."/>
            <person name="Kravitz S.A."/>
            <person name="Mouchard L."/>
            <person name="Reinert K."/>
            <person name="Remington K.A."/>
            <person name="Clark A.G."/>
            <person name="Waterman M.S."/>
            <person name="Eichler E.E."/>
            <person name="Adams M.D."/>
            <person name="Hunkapiller M.W."/>
            <person name="Myers E.W."/>
            <person name="Venter J.C."/>
        </authorList>
    </citation>
    <scope>NUCLEOTIDE SEQUENCE [LARGE SCALE GENOMIC DNA]</scope>
</reference>
<reference key="5">
    <citation type="journal article" date="2004" name="Genome Res.">
        <title>The status, quality, and expansion of the NIH full-length cDNA project: the Mammalian Gene Collection (MGC).</title>
        <authorList>
            <consortium name="The MGC Project Team"/>
        </authorList>
    </citation>
    <scope>NUCLEOTIDE SEQUENCE [LARGE SCALE MRNA] (ISOFORM 1)</scope>
    <scope>VARIANT MET-70</scope>
    <source>
        <tissue>Duodenum</tissue>
        <tissue>Uterus</tissue>
    </source>
</reference>
<reference key="6">
    <citation type="journal article" date="2008" name="Biochem. Biophys. Res. Commun.">
        <title>Human carbonyl reductase 4 is a mitochondrial NADPH-dependent quinone reductase.</title>
        <authorList>
            <person name="Endo S."/>
            <person name="Matsunaga T."/>
            <person name="Kitade Y."/>
            <person name="Ohno S."/>
            <person name="Tajima K."/>
            <person name="El-Kabbani O."/>
            <person name="Hara A."/>
        </authorList>
    </citation>
    <scope>FUNCTION</scope>
    <scope>CATALYTIC ACTIVITY</scope>
    <scope>BIOPHYSICOCHEMICAL PROPERTIES</scope>
    <scope>SUBUNIT</scope>
    <scope>SUBCELLULAR LOCATION</scope>
    <scope>IDENTIFICATION BY MASS SPECTROMETRY</scope>
    <scope>TISSUE SPECIFICITY</scope>
</reference>
<reference key="7">
    <citation type="journal article" date="2009" name="FASEB J.">
        <title>17beta-Hydroxysteroid dehydrogenase type 8 and carbonyl reductase type 4 assemble as a ketoacyl reductase of human mitochondrial FAS.</title>
        <authorList>
            <person name="Chen Z."/>
            <person name="Kastaniotis A.J."/>
            <person name="Miinalainen I.J."/>
            <person name="Rajaram V."/>
            <person name="Wierenga R.K."/>
            <person name="Hiltunen J.K."/>
        </authorList>
    </citation>
    <scope>FUNCTION</scope>
    <scope>SUBCELLULAR LOCATION</scope>
    <scope>INTERACTION WITH HSD17B8</scope>
    <scope>PATHWAY</scope>
</reference>
<reference key="8">
    <citation type="journal article" date="2012" name="Proc. Natl. Acad. Sci. U.S.A.">
        <title>N-terminal acetylome analyses and functional insights of the N-terminal acetyltransferase NatB.</title>
        <authorList>
            <person name="Van Damme P."/>
            <person name="Lasa M."/>
            <person name="Polevoda B."/>
            <person name="Gazquez C."/>
            <person name="Elosegui-Artola A."/>
            <person name="Kim D.S."/>
            <person name="De Juan-Pardo E."/>
            <person name="Demeyer K."/>
            <person name="Hole K."/>
            <person name="Larrea E."/>
            <person name="Timmerman E."/>
            <person name="Prieto J."/>
            <person name="Arnesen T."/>
            <person name="Sherman F."/>
            <person name="Gevaert K."/>
            <person name="Aldabe R."/>
        </authorList>
    </citation>
    <scope>ACETYLATION [LARGE SCALE ANALYSIS] AT MET-1</scope>
    <scope>IDENTIFICATION BY MASS SPECTROMETRY [LARGE SCALE ANALYSIS]</scope>
</reference>
<reference key="9">
    <citation type="journal article" date="2014" name="J. Proteomics">
        <title>An enzyme assisted RP-RPLC approach for in-depth analysis of human liver phosphoproteome.</title>
        <authorList>
            <person name="Bian Y."/>
            <person name="Song C."/>
            <person name="Cheng K."/>
            <person name="Dong M."/>
            <person name="Wang F."/>
            <person name="Huang J."/>
            <person name="Sun D."/>
            <person name="Wang L."/>
            <person name="Ye M."/>
            <person name="Zou H."/>
        </authorList>
    </citation>
    <scope>IDENTIFICATION BY MASS SPECTROMETRY [LARGE SCALE ANALYSIS]</scope>
    <source>
        <tissue>Liver</tissue>
    </source>
</reference>
<reference key="10">
    <citation type="journal article" date="2014" name="Nat. Commun.">
        <title>Insights into mitochondrial fatty acid synthesis from the structure of heterotetrameric 3-ketoacyl-ACP reductase/3R-hydroxyacyl-CoA dehydrogenase.</title>
        <authorList>
            <person name="Venkatesan R."/>
            <person name="Sah-Teli S.K."/>
            <person name="Awoniyi L.O."/>
            <person name="Jiang G."/>
            <person name="Prus P."/>
            <person name="Kastaniotis A.J."/>
            <person name="Hiltunen J.K."/>
            <person name="Wierenga R.K."/>
            <person name="Chen Z."/>
        </authorList>
    </citation>
    <scope>X-RAY CRYSTALLOGRAPHY (2.34 ANGSTROMS) IN COMPLEX WITH NADP AND HSD17B8</scope>
    <scope>FUNCTION</scope>
    <scope>CATALYTIC ACTIVITY</scope>
    <scope>INTERACTION WITH HSD17B8</scope>
    <scope>SUBUNIT</scope>
    <scope>PATHWAY</scope>
    <scope>MUTAGENESIS OF GLY-9; ARG-12; ARG-34; SER-135; TYR-148; LYS-152; ARG-168 AND LYS-169</scope>
</reference>
<reference key="11">
    <citation type="journal article" date="2011" name="BMC Syst. Biol.">
        <title>Initial characterization of the human central proteome.</title>
        <authorList>
            <person name="Burkard T.R."/>
            <person name="Planyavsky M."/>
            <person name="Kaupe I."/>
            <person name="Breitwieser F.P."/>
            <person name="Buerckstuemmer T."/>
            <person name="Bennett K.L."/>
            <person name="Superti-Furga G."/>
            <person name="Colinge J."/>
        </authorList>
    </citation>
    <scope>VARIANT [LARGE SCALE ANALYSIS] MET-70</scope>
    <scope>IDENTIFICATION BY MASS SPECTROMETRY [LARGE SCALE ANALYSIS]</scope>
</reference>
<comment type="function">
    <text evidence="6 7 8">Component of the heterotetramer complex KAR (3-ketoacyl-[acyl carrier protein] reductase or 3-ketoacyl-[ACP] reductase) that forms part of the mitochondrial fatty acid synthase (mtFAS). Beta-subunit of the KAR heterotetramer complex, responsible for the 3-ketoacyl-ACP reductase activity of the mtFAS, reduces 3-oxoacyl-[ACP] to (3R)-hydroxyacyl-[ACP] in a NADPH-dependent manner with no chain length preference, thereby participating in mitochondrial fatty acid biosynthesis (PubMed:25203508). The homotetramer has NADPH-dependent quinone reductase activity (in vitro), hence could play a role in protection against cytotoxicity of exogenous quinones (PubMed:19000905). As a heterotetramer, it can also reduce 9,10-phenanthrenequinone, 1,4-benzoquinone and various other o-quinones and p-quinones (in vitro) (PubMed:19000905, PubMed:19571038, PubMed:25203508).</text>
</comment>
<comment type="catalytic activity">
    <reaction evidence="8">
        <text>a (3R)-hydroxyacyl-[ACP] + NADP(+) = a 3-oxoacyl-[ACP] + NADPH + H(+)</text>
        <dbReference type="Rhea" id="RHEA:17397"/>
        <dbReference type="Rhea" id="RHEA-COMP:9916"/>
        <dbReference type="Rhea" id="RHEA-COMP:9945"/>
        <dbReference type="ChEBI" id="CHEBI:15378"/>
        <dbReference type="ChEBI" id="CHEBI:57783"/>
        <dbReference type="ChEBI" id="CHEBI:58349"/>
        <dbReference type="ChEBI" id="CHEBI:78776"/>
        <dbReference type="ChEBI" id="CHEBI:78827"/>
        <dbReference type="EC" id="1.1.1.100"/>
    </reaction>
    <physiologicalReaction direction="right-to-left" evidence="8">
        <dbReference type="Rhea" id="RHEA:17399"/>
    </physiologicalReaction>
</comment>
<comment type="catalytic activity">
    <reaction evidence="6">
        <text>a quinone + NADPH + H(+) = a quinol + NADP(+)</text>
        <dbReference type="Rhea" id="RHEA:46164"/>
        <dbReference type="ChEBI" id="CHEBI:15378"/>
        <dbReference type="ChEBI" id="CHEBI:24646"/>
        <dbReference type="ChEBI" id="CHEBI:57783"/>
        <dbReference type="ChEBI" id="CHEBI:58349"/>
        <dbReference type="ChEBI" id="CHEBI:132124"/>
        <dbReference type="EC" id="1.6.5.10"/>
    </reaction>
    <physiologicalReaction direction="left-to-right" evidence="6">
        <dbReference type="Rhea" id="RHEA:46165"/>
    </physiologicalReaction>
</comment>
<comment type="biophysicochemical properties">
    <kinetics>
        <KM evidence="6">11 uM for NADPH (with homotetramer)</KM>
        <KM evidence="6">1.6 uM for 9,10-phenanthroquinone (with homotetramer)</KM>
        <KM evidence="6">1.9 uM for 1,4-benzoquinone (with homotetramer)</KM>
    </kinetics>
    <phDependence>
        <text evidence="6">Optimum pH is 6-8 (with homotetramer).</text>
    </phDependence>
</comment>
<comment type="pathway">
    <text evidence="7 8">Lipid metabolism; fatty acid biosynthesis.</text>
</comment>
<comment type="subunit">
    <text evidence="6 7 8">Homotetramer (in vitro) (PubMed:19000905). Heterotetramer with HSD17B8; contains two molecules each of HSD17B8 and CBR4 (PubMed:19571038, PubMed:25203508). Does not form homotetramers when HSD17B8 is coexpressed, only heterotetramers (in vitro) (PubMed:25203508).</text>
</comment>
<comment type="interaction">
    <interactant intactId="EBI-10897344">
        <id>Q8N4T8</id>
    </interactant>
    <interactant intactId="EBI-1538838">
        <id>Q2QGD7</id>
        <label>ZXDC</label>
    </interactant>
    <organismsDiffer>false</organismsDiffer>
    <experiments>3</experiments>
</comment>
<comment type="subcellular location">
    <subcellularLocation>
        <location evidence="6 7">Mitochondrion matrix</location>
    </subcellularLocation>
</comment>
<comment type="alternative products">
    <event type="alternative splicing"/>
    <isoform>
        <id>Q8N4T8-1</id>
        <name>1</name>
        <sequence type="displayed"/>
    </isoform>
    <isoform>
        <id>Q8N4T8-2</id>
        <name>2</name>
        <sequence type="described" ref="VSP_031527"/>
    </isoform>
</comment>
<comment type="tissue specificity">
    <text evidence="6 12">Detected in liver and kidney (at protein level) (PubMed:19000905). Displays the highest expression in neuronal and muscle tissues (PubMed:25203508).</text>
</comment>
<comment type="similarity">
    <text evidence="13">Belongs to the short-chain dehydrogenases/reductases (SDR) family.</text>
</comment>
<dbReference type="EC" id="1.1.1.100" evidence="8"/>
<dbReference type="EC" id="1.6.5.10" evidence="6"/>
<dbReference type="EMBL" id="AK027337">
    <property type="protein sequence ID" value="BAB55045.1"/>
    <property type="molecule type" value="mRNA"/>
</dbReference>
<dbReference type="EMBL" id="AK291756">
    <property type="protein sequence ID" value="BAF84445.1"/>
    <property type="molecule type" value="mRNA"/>
</dbReference>
<dbReference type="EMBL" id="AL833393">
    <property type="protein sequence ID" value="CAH10582.1"/>
    <property type="molecule type" value="mRNA"/>
</dbReference>
<dbReference type="EMBL" id="AC021151">
    <property type="status" value="NOT_ANNOTATED_CDS"/>
    <property type="molecule type" value="Genomic_DNA"/>
</dbReference>
<dbReference type="EMBL" id="CH471056">
    <property type="protein sequence ID" value="EAX04797.1"/>
    <property type="molecule type" value="Genomic_DNA"/>
</dbReference>
<dbReference type="EMBL" id="BC021973">
    <property type="protein sequence ID" value="AAH21973.1"/>
    <property type="molecule type" value="mRNA"/>
</dbReference>
<dbReference type="EMBL" id="BC033650">
    <property type="protein sequence ID" value="AAH33650.1"/>
    <property type="molecule type" value="mRNA"/>
</dbReference>
<dbReference type="CCDS" id="CCDS3812.1">
    <molecule id="Q8N4T8-1"/>
</dbReference>
<dbReference type="RefSeq" id="NP_116172.2">
    <molecule id="Q8N4T8-1"/>
    <property type="nucleotide sequence ID" value="NM_032783.4"/>
</dbReference>
<dbReference type="PDB" id="4CQL">
    <property type="method" value="X-ray"/>
    <property type="resolution" value="2.85 A"/>
    <property type="chains" value="B/C/F/G/J/K/N/O=1-237"/>
</dbReference>
<dbReference type="PDB" id="4CQM">
    <property type="method" value="X-ray"/>
    <property type="resolution" value="2.34 A"/>
    <property type="chains" value="B/C/F/G/J/K/N/O=1-237"/>
</dbReference>
<dbReference type="PDBsum" id="4CQL"/>
<dbReference type="PDBsum" id="4CQM"/>
<dbReference type="SMR" id="Q8N4T8"/>
<dbReference type="BioGRID" id="124314">
    <property type="interactions" value="55"/>
</dbReference>
<dbReference type="ComplexPortal" id="CPX-949">
    <property type="entry name" value="Mitochondrial 3-oxoacyl-[acyl-carrier-protein] reductase"/>
</dbReference>
<dbReference type="FunCoup" id="Q8N4T8">
    <property type="interactions" value="657"/>
</dbReference>
<dbReference type="IntAct" id="Q8N4T8">
    <property type="interactions" value="33"/>
</dbReference>
<dbReference type="MINT" id="Q8N4T8"/>
<dbReference type="STRING" id="9606.ENSP00000303525"/>
<dbReference type="iPTMnet" id="Q8N4T8"/>
<dbReference type="PhosphoSitePlus" id="Q8N4T8"/>
<dbReference type="SwissPalm" id="Q8N4T8"/>
<dbReference type="BioMuta" id="CBR4"/>
<dbReference type="DMDM" id="269849708"/>
<dbReference type="jPOST" id="Q8N4T8"/>
<dbReference type="MassIVE" id="Q8N4T8"/>
<dbReference type="PaxDb" id="9606-ENSP00000303525"/>
<dbReference type="PeptideAtlas" id="Q8N4T8"/>
<dbReference type="ProteomicsDB" id="71975">
    <molecule id="Q8N4T8-1"/>
</dbReference>
<dbReference type="ProteomicsDB" id="71976">
    <molecule id="Q8N4T8-2"/>
</dbReference>
<dbReference type="Pumba" id="Q8N4T8"/>
<dbReference type="Antibodypedia" id="28439">
    <property type="antibodies" value="179 antibodies from 24 providers"/>
</dbReference>
<dbReference type="DNASU" id="84869"/>
<dbReference type="Ensembl" id="ENST00000306193.8">
    <molecule id="Q8N4T8-1"/>
    <property type="protein sequence ID" value="ENSP00000303525.3"/>
    <property type="gene ID" value="ENSG00000145439.12"/>
</dbReference>
<dbReference type="Ensembl" id="ENST00000504480.5">
    <molecule id="Q8N4T8-2"/>
    <property type="protein sequence ID" value="ENSP00000427615.1"/>
    <property type="gene ID" value="ENSG00000145439.12"/>
</dbReference>
<dbReference type="GeneID" id="84869"/>
<dbReference type="KEGG" id="hsa:84869"/>
<dbReference type="MANE-Select" id="ENST00000306193.8">
    <property type="protein sequence ID" value="ENSP00000303525.3"/>
    <property type="RefSeq nucleotide sequence ID" value="NM_032783.5"/>
    <property type="RefSeq protein sequence ID" value="NP_116172.2"/>
</dbReference>
<dbReference type="UCSC" id="uc003iry.4">
    <molecule id="Q8N4T8-1"/>
    <property type="organism name" value="human"/>
</dbReference>
<dbReference type="AGR" id="HGNC:25891"/>
<dbReference type="CTD" id="84869"/>
<dbReference type="DisGeNET" id="84869"/>
<dbReference type="GeneCards" id="CBR4"/>
<dbReference type="HGNC" id="HGNC:25891">
    <property type="gene designation" value="CBR4"/>
</dbReference>
<dbReference type="HPA" id="ENSG00000145439">
    <property type="expression patterns" value="Low tissue specificity"/>
</dbReference>
<dbReference type="MIM" id="619394">
    <property type="type" value="gene"/>
</dbReference>
<dbReference type="neXtProt" id="NX_Q8N4T8"/>
<dbReference type="OpenTargets" id="ENSG00000145439"/>
<dbReference type="PharmGKB" id="PA144596471"/>
<dbReference type="VEuPathDB" id="HostDB:ENSG00000145439"/>
<dbReference type="eggNOG" id="KOG1200">
    <property type="taxonomic scope" value="Eukaryota"/>
</dbReference>
<dbReference type="GeneTree" id="ENSGT00940000157620"/>
<dbReference type="HOGENOM" id="CLU_010194_1_3_1"/>
<dbReference type="InParanoid" id="Q8N4T8"/>
<dbReference type="OMA" id="CQKHMVD"/>
<dbReference type="OrthoDB" id="294295at2759"/>
<dbReference type="PAN-GO" id="Q8N4T8">
    <property type="GO annotations" value="3 GO annotations based on evolutionary models"/>
</dbReference>
<dbReference type="PhylomeDB" id="Q8N4T8"/>
<dbReference type="TreeFam" id="TF354265"/>
<dbReference type="BioCyc" id="MetaCyc:ENSG00000145439-MONOMER"/>
<dbReference type="PathwayCommons" id="Q8N4T8"/>
<dbReference type="Reactome" id="R-HSA-75105">
    <property type="pathway name" value="Fatty acyl-CoA biosynthesis"/>
</dbReference>
<dbReference type="SABIO-RK" id="Q8N4T8"/>
<dbReference type="SignaLink" id="Q8N4T8"/>
<dbReference type="UniPathway" id="UPA00094"/>
<dbReference type="BioGRID-ORCS" id="84869">
    <property type="hits" value="13 hits in 1159 CRISPR screens"/>
</dbReference>
<dbReference type="CD-CODE" id="91857CE7">
    <property type="entry name" value="Nucleolus"/>
</dbReference>
<dbReference type="ChiTaRS" id="CBR4">
    <property type="organism name" value="human"/>
</dbReference>
<dbReference type="EvolutionaryTrace" id="Q8N4T8"/>
<dbReference type="GenomeRNAi" id="84869"/>
<dbReference type="Pharos" id="Q8N4T8">
    <property type="development level" value="Tbio"/>
</dbReference>
<dbReference type="PRO" id="PR:Q8N4T8"/>
<dbReference type="Proteomes" id="UP000005640">
    <property type="component" value="Chromosome 4"/>
</dbReference>
<dbReference type="RNAct" id="Q8N4T8">
    <property type="molecule type" value="protein"/>
</dbReference>
<dbReference type="Bgee" id="ENSG00000145439">
    <property type="expression patterns" value="Expressed in secondary oocyte and 207 other cell types or tissues"/>
</dbReference>
<dbReference type="ExpressionAtlas" id="Q8N4T8">
    <property type="expression patterns" value="baseline and differential"/>
</dbReference>
<dbReference type="GO" id="GO:0005759">
    <property type="term" value="C:mitochondrial matrix"/>
    <property type="evidence" value="ECO:0000314"/>
    <property type="project" value="UniProtKB"/>
</dbReference>
<dbReference type="GO" id="GO:0005739">
    <property type="term" value="C:mitochondrion"/>
    <property type="evidence" value="ECO:0006056"/>
    <property type="project" value="FlyBase"/>
</dbReference>
<dbReference type="GO" id="GO:1990204">
    <property type="term" value="C:oxidoreductase complex"/>
    <property type="evidence" value="ECO:0000314"/>
    <property type="project" value="UniProtKB"/>
</dbReference>
<dbReference type="GO" id="GO:0004316">
    <property type="term" value="F:3-oxoacyl-[acyl-carrier-protein] reductase (NADPH) activity"/>
    <property type="evidence" value="ECO:0000314"/>
    <property type="project" value="UniProtKB"/>
</dbReference>
<dbReference type="GO" id="GO:0003955">
    <property type="term" value="F:NAD(P)H dehydrogenase (quinone) activity"/>
    <property type="evidence" value="ECO:0000314"/>
    <property type="project" value="UniProtKB"/>
</dbReference>
<dbReference type="GO" id="GO:0070402">
    <property type="term" value="F:NADPH binding"/>
    <property type="evidence" value="ECO:0000314"/>
    <property type="project" value="UniProtKB"/>
</dbReference>
<dbReference type="GO" id="GO:0008753">
    <property type="term" value="F:NADPH dehydrogenase (quinone) activity"/>
    <property type="evidence" value="ECO:0000314"/>
    <property type="project" value="UniProtKB"/>
</dbReference>
<dbReference type="GO" id="GO:0016616">
    <property type="term" value="F:oxidoreductase activity, acting on the CH-OH group of donors, NAD or NADP as acceptor"/>
    <property type="evidence" value="ECO:0000318"/>
    <property type="project" value="GO_Central"/>
</dbReference>
<dbReference type="GO" id="GO:0048038">
    <property type="term" value="F:quinone binding"/>
    <property type="evidence" value="ECO:0000314"/>
    <property type="project" value="UniProtKB"/>
</dbReference>
<dbReference type="GO" id="GO:0044597">
    <property type="term" value="P:daunorubicin metabolic process"/>
    <property type="evidence" value="ECO:0000315"/>
    <property type="project" value="UniProtKB"/>
</dbReference>
<dbReference type="GO" id="GO:0044598">
    <property type="term" value="P:doxorubicin metabolic process"/>
    <property type="evidence" value="ECO:0000315"/>
    <property type="project" value="UniProtKB"/>
</dbReference>
<dbReference type="GO" id="GO:0006633">
    <property type="term" value="P:fatty acid biosynthetic process"/>
    <property type="evidence" value="ECO:0000315"/>
    <property type="project" value="UniProtKB"/>
</dbReference>
<dbReference type="GO" id="GO:0046949">
    <property type="term" value="P:fatty-acyl-CoA biosynthetic process"/>
    <property type="evidence" value="ECO:0000304"/>
    <property type="project" value="Reactome"/>
</dbReference>
<dbReference type="GO" id="GO:0051290">
    <property type="term" value="P:protein heterotetramerization"/>
    <property type="evidence" value="ECO:0000314"/>
    <property type="project" value="UniProtKB"/>
</dbReference>
<dbReference type="GO" id="GO:0051289">
    <property type="term" value="P:protein homotetramerization"/>
    <property type="evidence" value="ECO:0000314"/>
    <property type="project" value="UniProtKB"/>
</dbReference>
<dbReference type="FunFam" id="3.40.50.720:FF:000285">
    <property type="entry name" value="Carbonyl reductase family member 4"/>
    <property type="match status" value="1"/>
</dbReference>
<dbReference type="Gene3D" id="3.40.50.720">
    <property type="entry name" value="NAD(P)-binding Rossmann-like Domain"/>
    <property type="match status" value="1"/>
</dbReference>
<dbReference type="InterPro" id="IPR036291">
    <property type="entry name" value="NAD(P)-bd_dom_sf"/>
</dbReference>
<dbReference type="InterPro" id="IPR020904">
    <property type="entry name" value="Sc_DH/Rdtase_CS"/>
</dbReference>
<dbReference type="InterPro" id="IPR002347">
    <property type="entry name" value="SDR_fam"/>
</dbReference>
<dbReference type="PANTHER" id="PTHR42760:SF133">
    <property type="entry name" value="3-OXOACYL-[ACYL-CARRIER-PROTEIN] REDUCTASE"/>
    <property type="match status" value="1"/>
</dbReference>
<dbReference type="PANTHER" id="PTHR42760">
    <property type="entry name" value="SHORT-CHAIN DEHYDROGENASES/REDUCTASES FAMILY MEMBER"/>
    <property type="match status" value="1"/>
</dbReference>
<dbReference type="Pfam" id="PF13561">
    <property type="entry name" value="adh_short_C2"/>
    <property type="match status" value="1"/>
</dbReference>
<dbReference type="PRINTS" id="PR00081">
    <property type="entry name" value="GDHRDH"/>
</dbReference>
<dbReference type="PRINTS" id="PR00080">
    <property type="entry name" value="SDRFAMILY"/>
</dbReference>
<dbReference type="SMART" id="SM00822">
    <property type="entry name" value="PKS_KR"/>
    <property type="match status" value="1"/>
</dbReference>
<dbReference type="SUPFAM" id="SSF51735">
    <property type="entry name" value="NAD(P)-binding Rossmann-fold domains"/>
    <property type="match status" value="1"/>
</dbReference>
<dbReference type="PROSITE" id="PS00061">
    <property type="entry name" value="ADH_SHORT"/>
    <property type="match status" value="1"/>
</dbReference>
<keyword id="KW-0002">3D-structure</keyword>
<keyword id="KW-0007">Acetylation</keyword>
<keyword id="KW-0025">Alternative splicing</keyword>
<keyword id="KW-0275">Fatty acid biosynthesis</keyword>
<keyword id="KW-0276">Fatty acid metabolism</keyword>
<keyword id="KW-0444">Lipid biosynthesis</keyword>
<keyword id="KW-0443">Lipid metabolism</keyword>
<keyword id="KW-0496">Mitochondrion</keyword>
<keyword id="KW-0520">NAD</keyword>
<keyword id="KW-0521">NADP</keyword>
<keyword id="KW-0560">Oxidoreductase</keyword>
<keyword id="KW-1267">Proteomics identification</keyword>
<keyword id="KW-1185">Reference proteome</keyword>
<accession>Q8N4T8</accession>
<accession>Q8WTW8</accession>
<accession>Q96K93</accession>
<name>CBR4_HUMAN</name>
<gene>
    <name type="primary">CBR4</name>
    <name type="synonym">SDR45C1</name>
</gene>
<proteinExistence type="evidence at protein level"/>
<feature type="chain" id="PRO_0000319878" description="3-oxoacyl-[acyl-carrier-protein] reductase">
    <location>
        <begin position="1"/>
        <end position="237"/>
    </location>
</feature>
<feature type="active site" description="Proton acceptor" evidence="2">
    <location>
        <position position="148"/>
    </location>
</feature>
<feature type="binding site" evidence="8 16">
    <location>
        <begin position="11"/>
        <end position="14"/>
    </location>
    <ligand>
        <name>NADP(+)</name>
        <dbReference type="ChEBI" id="CHEBI:58349"/>
    </ligand>
</feature>
<feature type="binding site" evidence="8 16">
    <location>
        <begin position="34"/>
        <end position="35"/>
    </location>
    <ligand>
        <name>NADP(+)</name>
        <dbReference type="ChEBI" id="CHEBI:58349"/>
    </ligand>
</feature>
<feature type="binding site" evidence="8 16">
    <location>
        <position position="56"/>
    </location>
    <ligand>
        <name>NADP(+)</name>
        <dbReference type="ChEBI" id="CHEBI:58349"/>
    </ligand>
</feature>
<feature type="binding site" evidence="8 16">
    <location>
        <begin position="83"/>
        <end position="85"/>
    </location>
    <ligand>
        <name>NADP(+)</name>
        <dbReference type="ChEBI" id="CHEBI:58349"/>
    </ligand>
</feature>
<feature type="binding site" evidence="15">
    <location>
        <position position="135"/>
    </location>
    <ligand>
        <name>substrate</name>
    </ligand>
</feature>
<feature type="binding site" evidence="8 16">
    <location>
        <position position="148"/>
    </location>
    <ligand>
        <name>NADP(+)</name>
        <dbReference type="ChEBI" id="CHEBI:58349"/>
    </ligand>
</feature>
<feature type="binding site" evidence="8 16">
    <location>
        <position position="152"/>
    </location>
    <ligand>
        <name>NADP(+)</name>
        <dbReference type="ChEBI" id="CHEBI:58349"/>
    </ligand>
</feature>
<feature type="binding site" evidence="8 16">
    <location>
        <begin position="181"/>
        <end position="183"/>
    </location>
    <ligand>
        <name>NADP(+)</name>
        <dbReference type="ChEBI" id="CHEBI:58349"/>
    </ligand>
</feature>
<feature type="site" description="Important for interaction with acyl carrier protein (ACP)" evidence="15">
    <location>
        <position position="169"/>
    </location>
</feature>
<feature type="modified residue" description="N-acetylmethionine" evidence="18">
    <location>
        <position position="1"/>
    </location>
</feature>
<feature type="modified residue" description="N6-acetyllysine" evidence="1">
    <location>
        <position position="40"/>
    </location>
</feature>
<feature type="modified residue" description="N6-acetyllysine" evidence="1">
    <location>
        <position position="96"/>
    </location>
</feature>
<feature type="modified residue" description="N6-acetyllysine" evidence="1">
    <location>
        <position position="195"/>
    </location>
</feature>
<feature type="splice variant" id="VSP_031527" description="In isoform 2." evidence="9">
    <location>
        <begin position="180"/>
        <end position="237"/>
    </location>
</feature>
<feature type="sequence variant" id="VAR_039049" description="In dbSNP:rs2877380." evidence="3 4 5 17">
    <original>L</original>
    <variation>M</variation>
    <location>
        <position position="70"/>
    </location>
</feature>
<feature type="mutagenesis site" description="Unable to restore growth of an OAR1-deficient yeast mutant." evidence="8">
    <original>G</original>
    <variation>S</variation>
    <location>
        <position position="9"/>
    </location>
</feature>
<feature type="mutagenesis site" description="Strongly reduced ability to restore growth of an OAR1-deficient yeast mutant." evidence="8">
    <original>R</original>
    <variation>A</variation>
    <location>
        <position position="12"/>
    </location>
</feature>
<feature type="mutagenesis site" description="Strongly reduced ability to restore growth of an OAR1-deficient yeast mutant. Strongly reduces NADPH-dependent reductase activity with acetoacetyl-CoA and 9,10-phenanthrene quinone. No effect on NADH-dependent reductase activities." evidence="8">
    <original>R</original>
    <variation>A</variation>
    <location>
        <position position="34"/>
    </location>
</feature>
<feature type="mutagenesis site" description="Unable to restore growth of an OAR1-deficient yeast mutant." evidence="8">
    <original>S</original>
    <variation>A</variation>
    <location>
        <position position="135"/>
    </location>
</feature>
<feature type="mutagenesis site" description="Unable to restore growth of an OAR1-deficient yeast mutant." evidence="8">
    <original>Y</original>
    <variation>A</variation>
    <location>
        <position position="148"/>
    </location>
</feature>
<feature type="mutagenesis site" description="Unable to restore growth of an OAR1-deficient yeast mutant. Abolishes NADPH-dependent reductase activity with acetoacetyl-CoA. Strongly reduces NADPH-dependent reductase activity with 9,10-phenanthrene quinone. No effect on NADH-dependent reductase activities." evidence="8">
    <original>K</original>
    <variation>A</variation>
    <location>
        <position position="152"/>
    </location>
</feature>
<feature type="mutagenesis site" description="Strongly reduced ability to restore growth of an OAR1-deficient yeast mutant. Increases NADPH-dependent reductase activity with acetoacetyl-CoA. Reduces NADPH-dependent reductase activity with 9,10-phenanthrene quinone. No effect on NADH-dependent reductase activities." evidence="8">
    <original>R</original>
    <variation>E</variation>
    <location>
        <position position="168"/>
    </location>
</feature>
<feature type="mutagenesis site" description="Unable to restore growth of an OAR1-deficient yeast mutant. Increases NADPH-dependent reductase activity with acetoacetyl-CoA. Reduces NADPH-dependent reductase activity with 9,10-phenanthrene quinone. No effect on NADH-dependent reductase activities." evidence="8">
    <original>K</original>
    <variation>E</variation>
    <location>
        <position position="169"/>
    </location>
</feature>
<feature type="strand" evidence="20">
    <location>
        <begin position="4"/>
        <end position="8"/>
    </location>
</feature>
<feature type="turn" evidence="20">
    <location>
        <begin position="9"/>
        <end position="11"/>
    </location>
</feature>
<feature type="helix" evidence="20">
    <location>
        <begin position="14"/>
        <end position="23"/>
    </location>
</feature>
<feature type="turn" evidence="20">
    <location>
        <begin position="24"/>
        <end position="26"/>
    </location>
</feature>
<feature type="strand" evidence="20">
    <location>
        <begin position="28"/>
        <end position="34"/>
    </location>
</feature>
<feature type="helix" evidence="20">
    <location>
        <begin position="36"/>
        <end position="45"/>
    </location>
</feature>
<feature type="strand" evidence="20">
    <location>
        <begin position="51"/>
        <end position="54"/>
    </location>
</feature>
<feature type="helix" evidence="20">
    <location>
        <begin position="60"/>
        <end position="69"/>
    </location>
</feature>
<feature type="turn" evidence="20">
    <location>
        <begin position="70"/>
        <end position="74"/>
    </location>
</feature>
<feature type="strand" evidence="20">
    <location>
        <begin position="77"/>
        <end position="82"/>
    </location>
</feature>
<feature type="turn" evidence="19">
    <location>
        <begin position="92"/>
        <end position="94"/>
    </location>
</feature>
<feature type="helix" evidence="20">
    <location>
        <begin position="97"/>
        <end position="107"/>
    </location>
</feature>
<feature type="helix" evidence="20">
    <location>
        <begin position="109"/>
        <end position="124"/>
    </location>
</feature>
<feature type="strand" evidence="20">
    <location>
        <begin position="128"/>
        <end position="133"/>
    </location>
</feature>
<feature type="helix" evidence="20">
    <location>
        <begin position="136"/>
        <end position="138"/>
    </location>
</feature>
<feature type="helix" evidence="20">
    <location>
        <begin position="146"/>
        <end position="165"/>
    </location>
</feature>
<feature type="helix" evidence="20">
    <location>
        <begin position="167"/>
        <end position="169"/>
    </location>
</feature>
<feature type="strand" evidence="20">
    <location>
        <begin position="171"/>
        <end position="178"/>
    </location>
</feature>
<feature type="helix" evidence="19">
    <location>
        <begin position="190"/>
        <end position="193"/>
    </location>
</feature>
<feature type="helix" evidence="20">
    <location>
        <begin position="206"/>
        <end position="218"/>
    </location>
</feature>
<feature type="strand" evidence="20">
    <location>
        <begin position="226"/>
        <end position="232"/>
    </location>
</feature>
<feature type="helix" evidence="20">
    <location>
        <begin position="233"/>
        <end position="235"/>
    </location>
</feature>
<evidence type="ECO:0000250" key="1">
    <source>
        <dbReference type="UniProtKB" id="Q91VT4"/>
    </source>
</evidence>
<evidence type="ECO:0000255" key="2">
    <source>
        <dbReference type="PROSITE-ProRule" id="PRU10001"/>
    </source>
</evidence>
<evidence type="ECO:0000269" key="3">
    <source>
    </source>
</evidence>
<evidence type="ECO:0000269" key="4">
    <source>
    </source>
</evidence>
<evidence type="ECO:0000269" key="5">
    <source>
    </source>
</evidence>
<evidence type="ECO:0000269" key="6">
    <source>
    </source>
</evidence>
<evidence type="ECO:0000269" key="7">
    <source>
    </source>
</evidence>
<evidence type="ECO:0000269" key="8">
    <source>
    </source>
</evidence>
<evidence type="ECO:0000303" key="9">
    <source>
    </source>
</evidence>
<evidence type="ECO:0000303" key="10">
    <source>
    </source>
</evidence>
<evidence type="ECO:0000303" key="11">
    <source>
    </source>
</evidence>
<evidence type="ECO:0000303" key="12">
    <source>
    </source>
</evidence>
<evidence type="ECO:0000305" key="13"/>
<evidence type="ECO:0000305" key="14">
    <source>
    </source>
</evidence>
<evidence type="ECO:0000305" key="15">
    <source>
    </source>
</evidence>
<evidence type="ECO:0007744" key="16">
    <source>
        <dbReference type="PDB" id="4CQM"/>
    </source>
</evidence>
<evidence type="ECO:0007744" key="17">
    <source>
    </source>
</evidence>
<evidence type="ECO:0007744" key="18">
    <source>
    </source>
</evidence>
<evidence type="ECO:0007829" key="19">
    <source>
        <dbReference type="PDB" id="4CQL"/>
    </source>
</evidence>
<evidence type="ECO:0007829" key="20">
    <source>
        <dbReference type="PDB" id="4CQM"/>
    </source>
</evidence>